<dbReference type="EMBL" id="U22511">
    <property type="protein sequence ID" value="AAA86369.1"/>
    <property type="molecule type" value="Genomic_DNA"/>
</dbReference>
<dbReference type="EMBL" id="AE008922">
    <property type="protein sequence ID" value="AAM41733.1"/>
    <property type="molecule type" value="Genomic_DNA"/>
</dbReference>
<dbReference type="PIR" id="S67817">
    <property type="entry name" value="S67817"/>
</dbReference>
<dbReference type="RefSeq" id="NP_637809.1">
    <property type="nucleotide sequence ID" value="NC_003902.1"/>
</dbReference>
<dbReference type="RefSeq" id="WP_002811076.1">
    <property type="nucleotide sequence ID" value="NC_003902.1"/>
</dbReference>
<dbReference type="SMR" id="P0A0T9"/>
<dbReference type="STRING" id="190485.XCC2457"/>
<dbReference type="EnsemblBacteria" id="AAM41733">
    <property type="protein sequence ID" value="AAM41733"/>
    <property type="gene ID" value="XCC2457"/>
</dbReference>
<dbReference type="KEGG" id="xcc:XCC2457"/>
<dbReference type="PATRIC" id="fig|190485.4.peg.2620"/>
<dbReference type="eggNOG" id="COG0776">
    <property type="taxonomic scope" value="Bacteria"/>
</dbReference>
<dbReference type="HOGENOM" id="CLU_105066_1_3_6"/>
<dbReference type="OrthoDB" id="9797747at2"/>
<dbReference type="PRO" id="PR:P0A0T9"/>
<dbReference type="Proteomes" id="UP000001010">
    <property type="component" value="Chromosome"/>
</dbReference>
<dbReference type="GO" id="GO:0005829">
    <property type="term" value="C:cytosol"/>
    <property type="evidence" value="ECO:0000318"/>
    <property type="project" value="GO_Central"/>
</dbReference>
<dbReference type="GO" id="GO:0003677">
    <property type="term" value="F:DNA binding"/>
    <property type="evidence" value="ECO:0000318"/>
    <property type="project" value="GO_Central"/>
</dbReference>
<dbReference type="GO" id="GO:0030527">
    <property type="term" value="F:structural constituent of chromatin"/>
    <property type="evidence" value="ECO:0007669"/>
    <property type="project" value="InterPro"/>
</dbReference>
<dbReference type="GO" id="GO:0006310">
    <property type="term" value="P:DNA recombination"/>
    <property type="evidence" value="ECO:0007669"/>
    <property type="project" value="UniProtKB-UniRule"/>
</dbReference>
<dbReference type="GO" id="GO:0009893">
    <property type="term" value="P:positive regulation of metabolic process"/>
    <property type="evidence" value="ECO:0007669"/>
    <property type="project" value="UniProtKB-ARBA"/>
</dbReference>
<dbReference type="GO" id="GO:0006355">
    <property type="term" value="P:regulation of DNA-templated transcription"/>
    <property type="evidence" value="ECO:0007669"/>
    <property type="project" value="UniProtKB-UniRule"/>
</dbReference>
<dbReference type="GO" id="GO:0006417">
    <property type="term" value="P:regulation of translation"/>
    <property type="evidence" value="ECO:0007669"/>
    <property type="project" value="UniProtKB-UniRule"/>
</dbReference>
<dbReference type="CDD" id="cd13835">
    <property type="entry name" value="IHF_A"/>
    <property type="match status" value="1"/>
</dbReference>
<dbReference type="FunFam" id="4.10.520.10:FF:000002">
    <property type="entry name" value="Integration host factor subunit alpha"/>
    <property type="match status" value="1"/>
</dbReference>
<dbReference type="Gene3D" id="4.10.520.10">
    <property type="entry name" value="IHF-like DNA-binding proteins"/>
    <property type="match status" value="1"/>
</dbReference>
<dbReference type="HAMAP" id="MF_00380">
    <property type="entry name" value="IHF_alpha"/>
    <property type="match status" value="1"/>
</dbReference>
<dbReference type="InterPro" id="IPR000119">
    <property type="entry name" value="Hist_DNA-bd"/>
</dbReference>
<dbReference type="InterPro" id="IPR020816">
    <property type="entry name" value="Histone-like_DNA-bd_CS"/>
</dbReference>
<dbReference type="InterPro" id="IPR010992">
    <property type="entry name" value="IHF-like_DNA-bd_dom_sf"/>
</dbReference>
<dbReference type="InterPro" id="IPR005684">
    <property type="entry name" value="IHF_alpha"/>
</dbReference>
<dbReference type="NCBIfam" id="TIGR00987">
    <property type="entry name" value="himA"/>
    <property type="match status" value="1"/>
</dbReference>
<dbReference type="NCBIfam" id="NF001401">
    <property type="entry name" value="PRK00285.1"/>
    <property type="match status" value="1"/>
</dbReference>
<dbReference type="PANTHER" id="PTHR33175">
    <property type="entry name" value="DNA-BINDING PROTEIN HU"/>
    <property type="match status" value="1"/>
</dbReference>
<dbReference type="PANTHER" id="PTHR33175:SF2">
    <property type="entry name" value="INTEGRATION HOST FACTOR SUBUNIT ALPHA"/>
    <property type="match status" value="1"/>
</dbReference>
<dbReference type="Pfam" id="PF00216">
    <property type="entry name" value="Bac_DNA_binding"/>
    <property type="match status" value="1"/>
</dbReference>
<dbReference type="PRINTS" id="PR01727">
    <property type="entry name" value="DNABINDINGHU"/>
</dbReference>
<dbReference type="SMART" id="SM00411">
    <property type="entry name" value="BHL"/>
    <property type="match status" value="1"/>
</dbReference>
<dbReference type="SUPFAM" id="SSF47729">
    <property type="entry name" value="IHF-like DNA-binding proteins"/>
    <property type="match status" value="1"/>
</dbReference>
<dbReference type="PROSITE" id="PS00045">
    <property type="entry name" value="HISTONE_LIKE"/>
    <property type="match status" value="1"/>
</dbReference>
<keyword id="KW-0233">DNA recombination</keyword>
<keyword id="KW-0238">DNA-binding</keyword>
<keyword id="KW-1185">Reference proteome</keyword>
<keyword id="KW-0804">Transcription</keyword>
<keyword id="KW-0805">Transcription regulation</keyword>
<keyword id="KW-0810">Translation regulation</keyword>
<accession>P0A0T9</accession>
<accession>Q56767</accession>
<feature type="chain" id="PRO_0000105034" description="Integration host factor subunit alpha">
    <location>
        <begin position="1"/>
        <end position="99"/>
    </location>
</feature>
<organism>
    <name type="scientific">Xanthomonas campestris pv. campestris (strain ATCC 33913 / DSM 3586 / NCPPB 528 / LMG 568 / P 25)</name>
    <dbReference type="NCBI Taxonomy" id="190485"/>
    <lineage>
        <taxon>Bacteria</taxon>
        <taxon>Pseudomonadati</taxon>
        <taxon>Pseudomonadota</taxon>
        <taxon>Gammaproteobacteria</taxon>
        <taxon>Lysobacterales</taxon>
        <taxon>Lysobacteraceae</taxon>
        <taxon>Xanthomonas</taxon>
    </lineage>
</organism>
<evidence type="ECO:0000250" key="1"/>
<evidence type="ECO:0000305" key="2"/>
<reference key="1">
    <citation type="submission" date="1995-04" db="EMBL/GenBank/DDBJ databases">
        <title>Recombinant-DNA mediated production of xanthan gum.</title>
        <authorList>
            <person name="Capage M.A."/>
            <person name="Doherty D.H."/>
            <person name="Betlach M.R."/>
            <person name="Vanderslice R.W."/>
        </authorList>
    </citation>
    <scope>NUCLEOTIDE SEQUENCE [GENOMIC DNA]</scope>
    <source>
        <strain>ATCC 13951 / NCIB 11803 / NRRL B-1459</strain>
    </source>
</reference>
<reference key="2">
    <citation type="journal article" date="2002" name="Nature">
        <title>Comparison of the genomes of two Xanthomonas pathogens with differing host specificities.</title>
        <authorList>
            <person name="da Silva A.C.R."/>
            <person name="Ferro J.A."/>
            <person name="Reinach F.C."/>
            <person name="Farah C.S."/>
            <person name="Furlan L.R."/>
            <person name="Quaggio R.B."/>
            <person name="Monteiro-Vitorello C.B."/>
            <person name="Van Sluys M.A."/>
            <person name="Almeida N.F. Jr."/>
            <person name="Alves L.M.C."/>
            <person name="do Amaral A.M."/>
            <person name="Bertolini M.C."/>
            <person name="Camargo L.E.A."/>
            <person name="Camarotte G."/>
            <person name="Cannavan F."/>
            <person name="Cardozo J."/>
            <person name="Chambergo F."/>
            <person name="Ciapina L.P."/>
            <person name="Cicarelli R.M.B."/>
            <person name="Coutinho L.L."/>
            <person name="Cursino-Santos J.R."/>
            <person name="El-Dorry H."/>
            <person name="Faria J.B."/>
            <person name="Ferreira A.J.S."/>
            <person name="Ferreira R.C.C."/>
            <person name="Ferro M.I.T."/>
            <person name="Formighieri E.F."/>
            <person name="Franco M.C."/>
            <person name="Greggio C.C."/>
            <person name="Gruber A."/>
            <person name="Katsuyama A.M."/>
            <person name="Kishi L.T."/>
            <person name="Leite R.P."/>
            <person name="Lemos E.G.M."/>
            <person name="Lemos M.V.F."/>
            <person name="Locali E.C."/>
            <person name="Machado M.A."/>
            <person name="Madeira A.M.B.N."/>
            <person name="Martinez-Rossi N.M."/>
            <person name="Martins E.C."/>
            <person name="Meidanis J."/>
            <person name="Menck C.F.M."/>
            <person name="Miyaki C.Y."/>
            <person name="Moon D.H."/>
            <person name="Moreira L.M."/>
            <person name="Novo M.T.M."/>
            <person name="Okura V.K."/>
            <person name="Oliveira M.C."/>
            <person name="Oliveira V.R."/>
            <person name="Pereira H.A."/>
            <person name="Rossi A."/>
            <person name="Sena J.A.D."/>
            <person name="Silva C."/>
            <person name="de Souza R.F."/>
            <person name="Spinola L.A.F."/>
            <person name="Takita M.A."/>
            <person name="Tamura R.E."/>
            <person name="Teixeira E.C."/>
            <person name="Tezza R.I.D."/>
            <person name="Trindade dos Santos M."/>
            <person name="Truffi D."/>
            <person name="Tsai S.M."/>
            <person name="White F.F."/>
            <person name="Setubal J.C."/>
            <person name="Kitajima J.P."/>
        </authorList>
    </citation>
    <scope>NUCLEOTIDE SEQUENCE [LARGE SCALE GENOMIC DNA]</scope>
    <source>
        <strain>ATCC 33913 / DSM 3586 / NCPPB 528 / LMG 568 / P 25</strain>
    </source>
</reference>
<name>IHFA_XANCP</name>
<proteinExistence type="inferred from homology"/>
<gene>
    <name type="primary">ihfA</name>
    <name type="synonym">gumA</name>
    <name type="synonym">himA</name>
    <name type="ordered locus">XCC2457</name>
</gene>
<protein>
    <recommendedName>
        <fullName>Integration host factor subunit alpha</fullName>
        <shortName>IHF-alpha</shortName>
    </recommendedName>
</protein>
<sequence length="99" mass="11214">MALTKAEMAERLFDEVGLNKREAKEFVDAFFDVLRDALEQGRQVKLSGFGNFDLRRKNQRPGRNPKTGEEIPISARTVVTFRPGQKLKERVEAYAGSGQ</sequence>
<comment type="function">
    <text evidence="1">This protein is one of the two subunits of integration host factor, a specific DNA-binding protein that functions in genetic recombination as well as in transcriptional and translational control.</text>
</comment>
<comment type="subunit">
    <text evidence="1">Heterodimer of an alpha and a beta chain.</text>
</comment>
<comment type="similarity">
    <text evidence="2">Belongs to the bacterial histone-like protein family.</text>
</comment>